<comment type="function">
    <text evidence="1 3">Catalyzes the synthesis of dihydrouridine, a modified base found in the D-loop of most tRNAs. Specifically modifies U47 in cytoplasmic tRNAs (By similarity). Catalyzes the synthesis of dihydrouridine in some mRNAs, thereby affecting their translation (By similarity).</text>
</comment>
<comment type="catalytic activity">
    <reaction evidence="1">
        <text>5,6-dihydrouridine(47) in tRNA + NAD(+) = uridine(47) in tRNA + NADH + H(+)</text>
        <dbReference type="Rhea" id="RHEA:53364"/>
        <dbReference type="Rhea" id="RHEA-COMP:13539"/>
        <dbReference type="Rhea" id="RHEA-COMP:13540"/>
        <dbReference type="ChEBI" id="CHEBI:15378"/>
        <dbReference type="ChEBI" id="CHEBI:57540"/>
        <dbReference type="ChEBI" id="CHEBI:57945"/>
        <dbReference type="ChEBI" id="CHEBI:65315"/>
        <dbReference type="ChEBI" id="CHEBI:74443"/>
        <dbReference type="EC" id="1.3.1.89"/>
    </reaction>
    <physiologicalReaction direction="right-to-left" evidence="1">
        <dbReference type="Rhea" id="RHEA:53366"/>
    </physiologicalReaction>
</comment>
<comment type="catalytic activity">
    <reaction evidence="1">
        <text>5,6-dihydrouridine(47) in tRNA + NADP(+) = uridine(47) in tRNA + NADPH + H(+)</text>
        <dbReference type="Rhea" id="RHEA:53360"/>
        <dbReference type="Rhea" id="RHEA-COMP:13539"/>
        <dbReference type="Rhea" id="RHEA-COMP:13540"/>
        <dbReference type="ChEBI" id="CHEBI:15378"/>
        <dbReference type="ChEBI" id="CHEBI:57783"/>
        <dbReference type="ChEBI" id="CHEBI:58349"/>
        <dbReference type="ChEBI" id="CHEBI:65315"/>
        <dbReference type="ChEBI" id="CHEBI:74443"/>
        <dbReference type="EC" id="1.3.1.89"/>
    </reaction>
    <physiologicalReaction direction="right-to-left" evidence="1">
        <dbReference type="Rhea" id="RHEA:53362"/>
    </physiologicalReaction>
</comment>
<comment type="catalytic activity">
    <reaction evidence="3">
        <text>a 5,6-dihydrouridine in mRNA + NAD(+) = a uridine in mRNA + NADH + H(+)</text>
        <dbReference type="Rhea" id="RHEA:69851"/>
        <dbReference type="Rhea" id="RHEA-COMP:14658"/>
        <dbReference type="Rhea" id="RHEA-COMP:17789"/>
        <dbReference type="ChEBI" id="CHEBI:15378"/>
        <dbReference type="ChEBI" id="CHEBI:57540"/>
        <dbReference type="ChEBI" id="CHEBI:57945"/>
        <dbReference type="ChEBI" id="CHEBI:65315"/>
        <dbReference type="ChEBI" id="CHEBI:74443"/>
    </reaction>
    <physiologicalReaction direction="right-to-left" evidence="3">
        <dbReference type="Rhea" id="RHEA:69853"/>
    </physiologicalReaction>
</comment>
<comment type="catalytic activity">
    <reaction evidence="3">
        <text>a 5,6-dihydrouridine in mRNA + NADP(+) = a uridine in mRNA + NADPH + H(+)</text>
        <dbReference type="Rhea" id="RHEA:69855"/>
        <dbReference type="Rhea" id="RHEA-COMP:14658"/>
        <dbReference type="Rhea" id="RHEA-COMP:17789"/>
        <dbReference type="ChEBI" id="CHEBI:15378"/>
        <dbReference type="ChEBI" id="CHEBI:57783"/>
        <dbReference type="ChEBI" id="CHEBI:58349"/>
        <dbReference type="ChEBI" id="CHEBI:65315"/>
        <dbReference type="ChEBI" id="CHEBI:74443"/>
    </reaction>
    <physiologicalReaction direction="right-to-left" evidence="3">
        <dbReference type="Rhea" id="RHEA:69857"/>
    </physiologicalReaction>
</comment>
<comment type="cofactor">
    <cofactor evidence="2">
        <name>FMN</name>
        <dbReference type="ChEBI" id="CHEBI:58210"/>
    </cofactor>
</comment>
<comment type="subcellular location">
    <subcellularLocation>
        <location evidence="1">Cytoplasm</location>
    </subcellularLocation>
    <subcellularLocation>
        <location evidence="1">Nucleus</location>
    </subcellularLocation>
</comment>
<comment type="similarity">
    <text evidence="6">Belongs to the Dus family. Dus3 subfamily.</text>
</comment>
<reference key="1">
    <citation type="journal article" date="2005" name="Science">
        <title>The genome of the basidiomycetous yeast and human pathogen Cryptococcus neoformans.</title>
        <authorList>
            <person name="Loftus B.J."/>
            <person name="Fung E."/>
            <person name="Roncaglia P."/>
            <person name="Rowley D."/>
            <person name="Amedeo P."/>
            <person name="Bruno D."/>
            <person name="Vamathevan J."/>
            <person name="Miranda M."/>
            <person name="Anderson I.J."/>
            <person name="Fraser J.A."/>
            <person name="Allen J.E."/>
            <person name="Bosdet I.E."/>
            <person name="Brent M.R."/>
            <person name="Chiu R."/>
            <person name="Doering T.L."/>
            <person name="Donlin M.J."/>
            <person name="D'Souza C.A."/>
            <person name="Fox D.S."/>
            <person name="Grinberg V."/>
            <person name="Fu J."/>
            <person name="Fukushima M."/>
            <person name="Haas B.J."/>
            <person name="Huang J.C."/>
            <person name="Janbon G."/>
            <person name="Jones S.J.M."/>
            <person name="Koo H.L."/>
            <person name="Krzywinski M.I."/>
            <person name="Kwon-Chung K.J."/>
            <person name="Lengeler K.B."/>
            <person name="Maiti R."/>
            <person name="Marra M.A."/>
            <person name="Marra R.E."/>
            <person name="Mathewson C.A."/>
            <person name="Mitchell T.G."/>
            <person name="Pertea M."/>
            <person name="Riggs F.R."/>
            <person name="Salzberg S.L."/>
            <person name="Schein J.E."/>
            <person name="Shvartsbeyn A."/>
            <person name="Shin H."/>
            <person name="Shumway M."/>
            <person name="Specht C.A."/>
            <person name="Suh B.B."/>
            <person name="Tenney A."/>
            <person name="Utterback T.R."/>
            <person name="Wickes B.L."/>
            <person name="Wortman J.R."/>
            <person name="Wye N.H."/>
            <person name="Kronstad J.W."/>
            <person name="Lodge J.K."/>
            <person name="Heitman J."/>
            <person name="Davis R.W."/>
            <person name="Fraser C.M."/>
            <person name="Hyman R.W."/>
        </authorList>
    </citation>
    <scope>NUCLEOTIDE SEQUENCE [LARGE SCALE GENOMIC DNA]</scope>
    <source>
        <strain>B-3501A</strain>
    </source>
</reference>
<protein>
    <recommendedName>
        <fullName>tRNA-dihydrouridine(47) synthase [NAD(P)(+)]</fullName>
        <ecNumber evidence="1">1.3.1.89</ecNumber>
    </recommendedName>
    <alternativeName>
        <fullName>mRNA-dihydrouridine synthase DUS3</fullName>
        <ecNumber evidence="3">1.3.1.-</ecNumber>
    </alternativeName>
    <alternativeName>
        <fullName>tRNA-dihydrouridine synthase 3</fullName>
    </alternativeName>
</protein>
<name>DUS3_CRYNB</name>
<feature type="chain" id="PRO_0000410068" description="tRNA-dihydrouridine(47) synthase [NAD(P)(+)]">
    <location>
        <begin position="1"/>
        <end position="725"/>
    </location>
</feature>
<feature type="zinc finger region" description="C3H1-type 1" evidence="4">
    <location>
        <begin position="101"/>
        <end position="131"/>
    </location>
</feature>
<feature type="zinc finger region" description="C3H1-type 2" evidence="4">
    <location>
        <begin position="178"/>
        <end position="203"/>
    </location>
</feature>
<feature type="region of interest" description="Disordered" evidence="5">
    <location>
        <begin position="1"/>
        <end position="26"/>
    </location>
</feature>
<feature type="region of interest" description="Disordered" evidence="5">
    <location>
        <begin position="43"/>
        <end position="95"/>
    </location>
</feature>
<feature type="region of interest" description="Disordered" evidence="5">
    <location>
        <begin position="275"/>
        <end position="337"/>
    </location>
</feature>
<feature type="compositionally biased region" description="Basic and acidic residues" evidence="5">
    <location>
        <begin position="51"/>
        <end position="73"/>
    </location>
</feature>
<feature type="compositionally biased region" description="Basic and acidic residues" evidence="5">
    <location>
        <begin position="80"/>
        <end position="89"/>
    </location>
</feature>
<feature type="compositionally biased region" description="Basic residues" evidence="5">
    <location>
        <begin position="284"/>
        <end position="295"/>
    </location>
</feature>
<feature type="compositionally biased region" description="Basic and acidic residues" evidence="5">
    <location>
        <begin position="325"/>
        <end position="337"/>
    </location>
</feature>
<feature type="active site" description="Proton donor" evidence="2">
    <location>
        <position position="453"/>
    </location>
</feature>
<feature type="binding site" evidence="2">
    <location>
        <begin position="364"/>
        <end position="366"/>
    </location>
    <ligand>
        <name>FMN</name>
        <dbReference type="ChEBI" id="CHEBI:58210"/>
    </ligand>
</feature>
<feature type="binding site" evidence="2">
    <location>
        <position position="418"/>
    </location>
    <ligand>
        <name>FMN</name>
        <dbReference type="ChEBI" id="CHEBI:58210"/>
    </ligand>
</feature>
<feature type="binding site" evidence="2">
    <location>
        <position position="493"/>
    </location>
    <ligand>
        <name>FMN</name>
        <dbReference type="ChEBI" id="CHEBI:58210"/>
    </ligand>
</feature>
<feature type="binding site" evidence="2">
    <location>
        <position position="524"/>
    </location>
    <ligand>
        <name>FMN</name>
        <dbReference type="ChEBI" id="CHEBI:58210"/>
    </ligand>
</feature>
<feature type="binding site" evidence="2">
    <location>
        <begin position="565"/>
        <end position="567"/>
    </location>
    <ligand>
        <name>FMN</name>
        <dbReference type="ChEBI" id="CHEBI:58210"/>
    </ligand>
</feature>
<feature type="binding site" evidence="2">
    <location>
        <begin position="589"/>
        <end position="590"/>
    </location>
    <ligand>
        <name>FMN</name>
        <dbReference type="ChEBI" id="CHEBI:58210"/>
    </ligand>
</feature>
<organism>
    <name type="scientific">Cryptococcus neoformans var. neoformans serotype D (strain B-3501A)</name>
    <name type="common">Filobasidiella neoformans</name>
    <dbReference type="NCBI Taxonomy" id="283643"/>
    <lineage>
        <taxon>Eukaryota</taxon>
        <taxon>Fungi</taxon>
        <taxon>Dikarya</taxon>
        <taxon>Basidiomycota</taxon>
        <taxon>Agaricomycotina</taxon>
        <taxon>Tremellomycetes</taxon>
        <taxon>Tremellales</taxon>
        <taxon>Cryptococcaceae</taxon>
        <taxon>Cryptococcus</taxon>
        <taxon>Cryptococcus neoformans species complex</taxon>
    </lineage>
</organism>
<sequence length="725" mass="80727">MTDDPAATPRPETSVNARPAFSGQAPIKAEYLINTTPIVESASASELNNIHPDDAAEGRTDSRDSRDGRDRPDNKRRKPNKQDKKDKKGQNKGRHFPVIREASVRICRAWETTGICDRADKGDCRYAHSWEGYFEVKPNDISYRPDWSLVGEAPFVVEGERVVGGEDVVGKTLDLDTVCPVLKDLGYCPFGWRCRFLGAHVKRVAAAVDGEKEKEAGPEKRMGEWQVENWVQSEVENGWKQKETNWPEHEVLNALRRSTASFPFSEAYLKKVDPDKPFTLQNKKPTKQQPHKRKNNVLDEEEAANGPTGIPSAGDDEENAMNATENERNEEKGKVYGETEAIDVPLRPEEKRRLNWEGGRYLAPLTTVGNLPFRRLCVDYGATITVSEMALAQPLVYGAKEEWALVRRHESEKMFGVQVAGGFPNRMVPAAEVIANTIGKGGGVDFVDVNMGCPIDLVFNQGAGSALMDSPGRLGKLLVGMNRALGDIPLTVKFRTGVAHGKPNAHKLIPRFVTEWGAGALTIHGRSRQQRYSKPADWEYIKTCVTALRESVADANLPPVPIFGNGDCFSAASYYEEMDRSGVDGVMVARGALIKPWIFTEIKERREWDISAVERLEGIKKFAEFGLSHWGSDTQGVNTTRRFLCEALSFQHRYIPIGLLERLPAKLNERPPAYRGRNELETLLASPFAGDWVKISEMFLGKVDEGFSFVPKHKSNAYGGEEAQG</sequence>
<dbReference type="EC" id="1.3.1.89" evidence="1"/>
<dbReference type="EC" id="1.3.1.-" evidence="3"/>
<dbReference type="EMBL" id="AAEY01000040">
    <property type="protein sequence ID" value="EAL19434.1"/>
    <property type="molecule type" value="Genomic_DNA"/>
</dbReference>
<dbReference type="RefSeq" id="XP_774081.1">
    <property type="nucleotide sequence ID" value="XM_768988.1"/>
</dbReference>
<dbReference type="SMR" id="P0CN29"/>
<dbReference type="GeneID" id="4937524"/>
<dbReference type="KEGG" id="cnb:CNBH0060"/>
<dbReference type="VEuPathDB" id="FungiDB:CNBH0060"/>
<dbReference type="HOGENOM" id="CLU_013299_7_0_1"/>
<dbReference type="OrthoDB" id="3312at5206"/>
<dbReference type="GO" id="GO:0005737">
    <property type="term" value="C:cytoplasm"/>
    <property type="evidence" value="ECO:0007669"/>
    <property type="project" value="UniProtKB-SubCell"/>
</dbReference>
<dbReference type="GO" id="GO:0034399">
    <property type="term" value="C:nuclear periphery"/>
    <property type="evidence" value="ECO:0007669"/>
    <property type="project" value="EnsemblFungi"/>
</dbReference>
<dbReference type="GO" id="GO:0050660">
    <property type="term" value="F:flavin adenine dinucleotide binding"/>
    <property type="evidence" value="ECO:0007669"/>
    <property type="project" value="InterPro"/>
</dbReference>
<dbReference type="GO" id="GO:0106414">
    <property type="term" value="F:mRNA dihydrouridine synthase activity"/>
    <property type="evidence" value="ECO:0007669"/>
    <property type="project" value="RHEA"/>
</dbReference>
<dbReference type="GO" id="GO:0003723">
    <property type="term" value="F:RNA binding"/>
    <property type="evidence" value="ECO:0007669"/>
    <property type="project" value="TreeGrafter"/>
</dbReference>
<dbReference type="GO" id="GO:0102265">
    <property type="term" value="F:tRNA-dihydrouridine47 synthase activity"/>
    <property type="evidence" value="ECO:0007669"/>
    <property type="project" value="UniProtKB-EC"/>
</dbReference>
<dbReference type="GO" id="GO:0008270">
    <property type="term" value="F:zinc ion binding"/>
    <property type="evidence" value="ECO:0007669"/>
    <property type="project" value="UniProtKB-KW"/>
</dbReference>
<dbReference type="GO" id="GO:0006397">
    <property type="term" value="P:mRNA processing"/>
    <property type="evidence" value="ECO:0007669"/>
    <property type="project" value="UniProtKB-KW"/>
</dbReference>
<dbReference type="CDD" id="cd02801">
    <property type="entry name" value="DUS_like_FMN"/>
    <property type="match status" value="1"/>
</dbReference>
<dbReference type="FunFam" id="3.20.20.70:FF:000145">
    <property type="entry name" value="tRNA-dihydrouridine(47) synthase [NAD(P)(+)]"/>
    <property type="match status" value="1"/>
</dbReference>
<dbReference type="Gene3D" id="3.20.20.70">
    <property type="entry name" value="Aldolase class I"/>
    <property type="match status" value="1"/>
</dbReference>
<dbReference type="InterPro" id="IPR013785">
    <property type="entry name" value="Aldolase_TIM"/>
</dbReference>
<dbReference type="InterPro" id="IPR035587">
    <property type="entry name" value="DUS-like_FMN-bd"/>
</dbReference>
<dbReference type="InterPro" id="IPR018517">
    <property type="entry name" value="tRNA_hU_synthase_CS"/>
</dbReference>
<dbReference type="InterPro" id="IPR000571">
    <property type="entry name" value="Znf_CCCH"/>
</dbReference>
<dbReference type="PANTHER" id="PTHR45846">
    <property type="entry name" value="TRNA-DIHYDROURIDINE(47) SYNTHASE [NAD(P)(+)]-LIKE"/>
    <property type="match status" value="1"/>
</dbReference>
<dbReference type="PANTHER" id="PTHR45846:SF1">
    <property type="entry name" value="TRNA-DIHYDROURIDINE(47) SYNTHASE [NAD(P)(+)]-LIKE"/>
    <property type="match status" value="1"/>
</dbReference>
<dbReference type="Pfam" id="PF01207">
    <property type="entry name" value="Dus"/>
    <property type="match status" value="1"/>
</dbReference>
<dbReference type="SUPFAM" id="SSF51395">
    <property type="entry name" value="FMN-linked oxidoreductases"/>
    <property type="match status" value="1"/>
</dbReference>
<dbReference type="PROSITE" id="PS01136">
    <property type="entry name" value="UPF0034"/>
    <property type="match status" value="1"/>
</dbReference>
<dbReference type="PROSITE" id="PS50103">
    <property type="entry name" value="ZF_C3H1"/>
    <property type="match status" value="2"/>
</dbReference>
<keyword id="KW-0963">Cytoplasm</keyword>
<keyword id="KW-0285">Flavoprotein</keyword>
<keyword id="KW-0288">FMN</keyword>
<keyword id="KW-0479">Metal-binding</keyword>
<keyword id="KW-0507">mRNA processing</keyword>
<keyword id="KW-0520">NAD</keyword>
<keyword id="KW-0521">NADP</keyword>
<keyword id="KW-0539">Nucleus</keyword>
<keyword id="KW-0560">Oxidoreductase</keyword>
<keyword id="KW-0677">Repeat</keyword>
<keyword id="KW-0819">tRNA processing</keyword>
<keyword id="KW-0862">Zinc</keyword>
<keyword id="KW-0863">Zinc-finger</keyword>
<proteinExistence type="inferred from homology"/>
<gene>
    <name type="primary">DUS3</name>
    <name type="ordered locus">CNBH0060</name>
</gene>
<evidence type="ECO:0000250" key="1">
    <source>
        <dbReference type="UniProtKB" id="Q06053"/>
    </source>
</evidence>
<evidence type="ECO:0000250" key="2">
    <source>
        <dbReference type="UniProtKB" id="Q5SMC7"/>
    </source>
</evidence>
<evidence type="ECO:0000250" key="3">
    <source>
        <dbReference type="UniProtKB" id="Q9UTH9"/>
    </source>
</evidence>
<evidence type="ECO:0000255" key="4">
    <source>
        <dbReference type="PROSITE-ProRule" id="PRU00723"/>
    </source>
</evidence>
<evidence type="ECO:0000256" key="5">
    <source>
        <dbReference type="SAM" id="MobiDB-lite"/>
    </source>
</evidence>
<evidence type="ECO:0000305" key="6"/>
<accession>P0CN29</accession>
<accession>Q55NT3</accession>
<accession>Q5KC68</accession>